<evidence type="ECO:0000250" key="1"/>
<evidence type="ECO:0000255" key="2"/>
<evidence type="ECO:0000255" key="3">
    <source>
        <dbReference type="PROSITE-ProRule" id="PRU10095"/>
    </source>
</evidence>
<evidence type="ECO:0000305" key="4"/>
<comment type="catalytic activity">
    <reaction>
        <text>Release of an N-terminal amino acid, Xaa-|-Yaa- from a peptide, amide or arylamide. Xaa is preferably Ala, but may be most amino acids including Pro (slow action). When a terminal hydrophobic residue is followed by a prolyl residue, the two may be released as an intact Xaa-Pro dipeptide.</text>
        <dbReference type="EC" id="3.4.11.2"/>
    </reaction>
</comment>
<comment type="cofactor">
    <cofactor evidence="1">
        <name>Zn(2+)</name>
        <dbReference type="ChEBI" id="CHEBI:29105"/>
    </cofactor>
    <text evidence="1">Binds 1 zinc ion per subunit.</text>
</comment>
<comment type="subunit">
    <text evidence="1">Homodimer.</text>
</comment>
<comment type="subcellular location">
    <subcellularLocation>
        <location evidence="1">Membrane</location>
        <topology evidence="1">Peripheral membrane protein</topology>
    </subcellularLocation>
    <subcellularLocation>
        <location evidence="1">Microsome membrane</location>
        <topology evidence="1">Peripheral membrane protein</topology>
    </subcellularLocation>
    <subcellularLocation>
        <location evidence="1">Cytoplasm</location>
    </subcellularLocation>
    <text>The dileucine internalization motif may be involved in intracellular sequestration.</text>
</comment>
<comment type="domain">
    <text evidence="1">Dileucine motif seems to be involved in protein-protein interactions.</text>
</comment>
<comment type="similarity">
    <text evidence="4">Belongs to the peptidase M1 family.</text>
</comment>
<comment type="sequence caution" evidence="4">
    <conflict type="erroneous termination">
        <sequence resource="EMBL" id="AK066996"/>
    </conflict>
    <text>Truncated C-terminus.</text>
</comment>
<accession>Q6Z6L4</accession>
<accession>A0A0P0VGK2</accession>
<proteinExistence type="evidence at transcript level"/>
<protein>
    <recommendedName>
        <fullName>Aminopeptidase M1-A</fullName>
        <ecNumber>3.4.11.2</ecNumber>
    </recommendedName>
    <alternativeName>
        <fullName>Alpha-aminoacylpeptide hydrolase</fullName>
    </alternativeName>
</protein>
<feature type="chain" id="PRO_0000424584" description="Aminopeptidase M1-A">
    <location>
        <begin position="1"/>
        <end position="878"/>
    </location>
</feature>
<feature type="region of interest" description="Required for membrane association" evidence="1">
    <location>
        <begin position="105"/>
        <end position="212"/>
    </location>
</feature>
<feature type="short sequence motif" description="Dileucine internalization motif" evidence="2">
    <location>
        <begin position="727"/>
        <end position="728"/>
    </location>
</feature>
<feature type="active site" description="Proton acceptor" evidence="3">
    <location>
        <position position="315"/>
    </location>
</feature>
<feature type="binding site" evidence="1">
    <location>
        <position position="145"/>
    </location>
    <ligand>
        <name>substrate</name>
    </ligand>
</feature>
<feature type="binding site" evidence="1">
    <location>
        <begin position="278"/>
        <end position="282"/>
    </location>
    <ligand>
        <name>substrate</name>
    </ligand>
</feature>
<feature type="binding site" evidence="3">
    <location>
        <position position="314"/>
    </location>
    <ligand>
        <name>Zn(2+)</name>
        <dbReference type="ChEBI" id="CHEBI:29105"/>
        <note>catalytic</note>
    </ligand>
</feature>
<feature type="binding site" evidence="3">
    <location>
        <position position="318"/>
    </location>
    <ligand>
        <name>Zn(2+)</name>
        <dbReference type="ChEBI" id="CHEBI:29105"/>
        <note>catalytic</note>
    </ligand>
</feature>
<feature type="binding site" evidence="3">
    <location>
        <position position="337"/>
    </location>
    <ligand>
        <name>Zn(2+)</name>
        <dbReference type="ChEBI" id="CHEBI:29105"/>
        <note>catalytic</note>
    </ligand>
</feature>
<feature type="site" description="Transition state stabilizer" evidence="1">
    <location>
        <position position="399"/>
    </location>
</feature>
<feature type="sequence conflict" description="In Ref. 5; AK066996." evidence="4" ref="5">
    <original>A</original>
    <variation>V</variation>
    <location>
        <position position="375"/>
    </location>
</feature>
<feature type="sequence conflict" description="In Ref. 5; AK066996." evidence="4" ref="5">
    <original>I</original>
    <variation>V</variation>
    <location>
        <position position="498"/>
    </location>
</feature>
<reference key="1">
    <citation type="journal article" date="2005" name="Nature">
        <title>The map-based sequence of the rice genome.</title>
        <authorList>
            <consortium name="International rice genome sequencing project (IRGSP)"/>
        </authorList>
    </citation>
    <scope>NUCLEOTIDE SEQUENCE [LARGE SCALE GENOMIC DNA]</scope>
    <source>
        <strain>cv. Nipponbare</strain>
    </source>
</reference>
<reference key="2">
    <citation type="journal article" date="2008" name="Nucleic Acids Res.">
        <title>The rice annotation project database (RAP-DB): 2008 update.</title>
        <authorList>
            <consortium name="The rice annotation project (RAP)"/>
        </authorList>
    </citation>
    <scope>GENOME REANNOTATION</scope>
    <source>
        <strain>cv. Nipponbare</strain>
    </source>
</reference>
<reference key="3">
    <citation type="journal article" date="2013" name="Rice">
        <title>Improvement of the Oryza sativa Nipponbare reference genome using next generation sequence and optical map data.</title>
        <authorList>
            <person name="Kawahara Y."/>
            <person name="de la Bastide M."/>
            <person name="Hamilton J.P."/>
            <person name="Kanamori H."/>
            <person name="McCombie W.R."/>
            <person name="Ouyang S."/>
            <person name="Schwartz D.C."/>
            <person name="Tanaka T."/>
            <person name="Wu J."/>
            <person name="Zhou S."/>
            <person name="Childs K.L."/>
            <person name="Davidson R.M."/>
            <person name="Lin H."/>
            <person name="Quesada-Ocampo L."/>
            <person name="Vaillancourt B."/>
            <person name="Sakai H."/>
            <person name="Lee S.S."/>
            <person name="Kim J."/>
            <person name="Numa H."/>
            <person name="Itoh T."/>
            <person name="Buell C.R."/>
            <person name="Matsumoto T."/>
        </authorList>
    </citation>
    <scope>GENOME REANNOTATION</scope>
    <source>
        <strain>cv. Nipponbare</strain>
    </source>
</reference>
<reference key="4">
    <citation type="journal article" date="2005" name="PLoS Biol.">
        <title>The genomes of Oryza sativa: a history of duplications.</title>
        <authorList>
            <person name="Yu J."/>
            <person name="Wang J."/>
            <person name="Lin W."/>
            <person name="Li S."/>
            <person name="Li H."/>
            <person name="Zhou J."/>
            <person name="Ni P."/>
            <person name="Dong W."/>
            <person name="Hu S."/>
            <person name="Zeng C."/>
            <person name="Zhang J."/>
            <person name="Zhang Y."/>
            <person name="Li R."/>
            <person name="Xu Z."/>
            <person name="Li S."/>
            <person name="Li X."/>
            <person name="Zheng H."/>
            <person name="Cong L."/>
            <person name="Lin L."/>
            <person name="Yin J."/>
            <person name="Geng J."/>
            <person name="Li G."/>
            <person name="Shi J."/>
            <person name="Liu J."/>
            <person name="Lv H."/>
            <person name="Li J."/>
            <person name="Wang J."/>
            <person name="Deng Y."/>
            <person name="Ran L."/>
            <person name="Shi X."/>
            <person name="Wang X."/>
            <person name="Wu Q."/>
            <person name="Li C."/>
            <person name="Ren X."/>
            <person name="Wang J."/>
            <person name="Wang X."/>
            <person name="Li D."/>
            <person name="Liu D."/>
            <person name="Zhang X."/>
            <person name="Ji Z."/>
            <person name="Zhao W."/>
            <person name="Sun Y."/>
            <person name="Zhang Z."/>
            <person name="Bao J."/>
            <person name="Han Y."/>
            <person name="Dong L."/>
            <person name="Ji J."/>
            <person name="Chen P."/>
            <person name="Wu S."/>
            <person name="Liu J."/>
            <person name="Xiao Y."/>
            <person name="Bu D."/>
            <person name="Tan J."/>
            <person name="Yang L."/>
            <person name="Ye C."/>
            <person name="Zhang J."/>
            <person name="Xu J."/>
            <person name="Zhou Y."/>
            <person name="Yu Y."/>
            <person name="Zhang B."/>
            <person name="Zhuang S."/>
            <person name="Wei H."/>
            <person name="Liu B."/>
            <person name="Lei M."/>
            <person name="Yu H."/>
            <person name="Li Y."/>
            <person name="Xu H."/>
            <person name="Wei S."/>
            <person name="He X."/>
            <person name="Fang L."/>
            <person name="Zhang Z."/>
            <person name="Zhang Y."/>
            <person name="Huang X."/>
            <person name="Su Z."/>
            <person name="Tong W."/>
            <person name="Li J."/>
            <person name="Tong Z."/>
            <person name="Li S."/>
            <person name="Ye J."/>
            <person name="Wang L."/>
            <person name="Fang L."/>
            <person name="Lei T."/>
            <person name="Chen C.-S."/>
            <person name="Chen H.-C."/>
            <person name="Xu Z."/>
            <person name="Li H."/>
            <person name="Huang H."/>
            <person name="Zhang F."/>
            <person name="Xu H."/>
            <person name="Li N."/>
            <person name="Zhao C."/>
            <person name="Li S."/>
            <person name="Dong L."/>
            <person name="Huang Y."/>
            <person name="Li L."/>
            <person name="Xi Y."/>
            <person name="Qi Q."/>
            <person name="Li W."/>
            <person name="Zhang B."/>
            <person name="Hu W."/>
            <person name="Zhang Y."/>
            <person name="Tian X."/>
            <person name="Jiao Y."/>
            <person name="Liang X."/>
            <person name="Jin J."/>
            <person name="Gao L."/>
            <person name="Zheng W."/>
            <person name="Hao B."/>
            <person name="Liu S.-M."/>
            <person name="Wang W."/>
            <person name="Yuan L."/>
            <person name="Cao M."/>
            <person name="McDermott J."/>
            <person name="Samudrala R."/>
            <person name="Wang J."/>
            <person name="Wong G.K.-S."/>
            <person name="Yang H."/>
        </authorList>
    </citation>
    <scope>NUCLEOTIDE SEQUENCE [LARGE SCALE GENOMIC DNA]</scope>
    <source>
        <strain>cv. Nipponbare</strain>
    </source>
</reference>
<reference key="5">
    <citation type="journal article" date="2003" name="Science">
        <title>Collection, mapping, and annotation of over 28,000 cDNA clones from japonica rice.</title>
        <authorList>
            <consortium name="The rice full-length cDNA consortium"/>
        </authorList>
    </citation>
    <scope>NUCLEOTIDE SEQUENCE [LARGE SCALE MRNA]</scope>
    <source>
        <strain>cv. Nipponbare</strain>
    </source>
</reference>
<organism>
    <name type="scientific">Oryza sativa subsp. japonica</name>
    <name type="common">Rice</name>
    <dbReference type="NCBI Taxonomy" id="39947"/>
    <lineage>
        <taxon>Eukaryota</taxon>
        <taxon>Viridiplantae</taxon>
        <taxon>Streptophyta</taxon>
        <taxon>Embryophyta</taxon>
        <taxon>Tracheophyta</taxon>
        <taxon>Spermatophyta</taxon>
        <taxon>Magnoliopsida</taxon>
        <taxon>Liliopsida</taxon>
        <taxon>Poales</taxon>
        <taxon>Poaceae</taxon>
        <taxon>BOP clade</taxon>
        <taxon>Oryzoideae</taxon>
        <taxon>Oryzeae</taxon>
        <taxon>Oryzinae</taxon>
        <taxon>Oryza</taxon>
        <taxon>Oryza sativa</taxon>
    </lineage>
</organism>
<dbReference type="EC" id="3.4.11.2"/>
<dbReference type="EMBL" id="AP004996">
    <property type="protein sequence ID" value="BAD17179.1"/>
    <property type="molecule type" value="Genomic_DNA"/>
</dbReference>
<dbReference type="EMBL" id="AP008208">
    <property type="protein sequence ID" value="BAF08217.1"/>
    <property type="molecule type" value="Genomic_DNA"/>
</dbReference>
<dbReference type="EMBL" id="AP014958">
    <property type="protein sequence ID" value="BAS77671.1"/>
    <property type="molecule type" value="Genomic_DNA"/>
</dbReference>
<dbReference type="EMBL" id="CM000139">
    <property type="protein sequence ID" value="EAZ22251.1"/>
    <property type="molecule type" value="Genomic_DNA"/>
</dbReference>
<dbReference type="EMBL" id="AK066996">
    <property type="status" value="NOT_ANNOTATED_CDS"/>
    <property type="molecule type" value="mRNA"/>
</dbReference>
<dbReference type="RefSeq" id="XP_015626085.1">
    <property type="nucleotide sequence ID" value="XM_015770599.1"/>
</dbReference>
<dbReference type="SMR" id="Q6Z6L4"/>
<dbReference type="FunCoup" id="Q6Z6L4">
    <property type="interactions" value="2738"/>
</dbReference>
<dbReference type="STRING" id="39947.Q6Z6L4"/>
<dbReference type="MEROPS" id="M01.A25"/>
<dbReference type="PaxDb" id="39947-Q6Z6L4"/>
<dbReference type="EnsemblPlants" id="Os02t0218200-01">
    <property type="protein sequence ID" value="Os02t0218200-01"/>
    <property type="gene ID" value="Os02g0218200"/>
</dbReference>
<dbReference type="Gramene" id="Os02t0218200-01">
    <property type="protein sequence ID" value="Os02t0218200-01"/>
    <property type="gene ID" value="Os02g0218200"/>
</dbReference>
<dbReference type="KEGG" id="dosa:Os02g0218200"/>
<dbReference type="eggNOG" id="KOG1046">
    <property type="taxonomic scope" value="Eukaryota"/>
</dbReference>
<dbReference type="HOGENOM" id="CLU_003705_0_1_1"/>
<dbReference type="InParanoid" id="Q6Z6L4"/>
<dbReference type="OMA" id="MMEYVAI"/>
<dbReference type="OrthoDB" id="10031169at2759"/>
<dbReference type="Proteomes" id="UP000000763">
    <property type="component" value="Chromosome 2"/>
</dbReference>
<dbReference type="Proteomes" id="UP000007752">
    <property type="component" value="Chromosome 2"/>
</dbReference>
<dbReference type="Proteomes" id="UP000059680">
    <property type="component" value="Chromosome 2"/>
</dbReference>
<dbReference type="ExpressionAtlas" id="Q6Z6L4">
    <property type="expression patterns" value="baseline and differential"/>
</dbReference>
<dbReference type="GO" id="GO:0005737">
    <property type="term" value="C:cytoplasm"/>
    <property type="evidence" value="ECO:0000318"/>
    <property type="project" value="GO_Central"/>
</dbReference>
<dbReference type="GO" id="GO:0005783">
    <property type="term" value="C:endoplasmic reticulum"/>
    <property type="evidence" value="ECO:0007669"/>
    <property type="project" value="UniProtKB-KW"/>
</dbReference>
<dbReference type="GO" id="GO:0005615">
    <property type="term" value="C:extracellular space"/>
    <property type="evidence" value="ECO:0000318"/>
    <property type="project" value="GO_Central"/>
</dbReference>
<dbReference type="GO" id="GO:0016020">
    <property type="term" value="C:membrane"/>
    <property type="evidence" value="ECO:0000318"/>
    <property type="project" value="GO_Central"/>
</dbReference>
<dbReference type="GO" id="GO:0016285">
    <property type="term" value="F:alanyl aminopeptidase activity"/>
    <property type="evidence" value="ECO:0007669"/>
    <property type="project" value="UniProtKB-EC"/>
</dbReference>
<dbReference type="GO" id="GO:0070006">
    <property type="term" value="F:metalloaminopeptidase activity"/>
    <property type="evidence" value="ECO:0000318"/>
    <property type="project" value="GO_Central"/>
</dbReference>
<dbReference type="GO" id="GO:0042277">
    <property type="term" value="F:peptide binding"/>
    <property type="evidence" value="ECO:0000318"/>
    <property type="project" value="GO_Central"/>
</dbReference>
<dbReference type="GO" id="GO:0008270">
    <property type="term" value="F:zinc ion binding"/>
    <property type="evidence" value="ECO:0000318"/>
    <property type="project" value="GO_Central"/>
</dbReference>
<dbReference type="GO" id="GO:0043171">
    <property type="term" value="P:peptide catabolic process"/>
    <property type="evidence" value="ECO:0000318"/>
    <property type="project" value="GO_Central"/>
</dbReference>
<dbReference type="GO" id="GO:0006508">
    <property type="term" value="P:proteolysis"/>
    <property type="evidence" value="ECO:0000318"/>
    <property type="project" value="GO_Central"/>
</dbReference>
<dbReference type="CDD" id="cd09601">
    <property type="entry name" value="M1_APN-Q_like"/>
    <property type="match status" value="1"/>
</dbReference>
<dbReference type="FunFam" id="1.10.390.10:FF:000001">
    <property type="entry name" value="Aminopeptidase"/>
    <property type="match status" value="1"/>
</dbReference>
<dbReference type="FunFam" id="1.25.50.20:FF:000002">
    <property type="entry name" value="Aminopeptidase"/>
    <property type="match status" value="1"/>
</dbReference>
<dbReference type="FunFam" id="2.60.40.1730:FF:000009">
    <property type="entry name" value="Aminopeptidase"/>
    <property type="match status" value="1"/>
</dbReference>
<dbReference type="FunFam" id="2.60.40.1910:FF:000007">
    <property type="entry name" value="Aminopeptidase"/>
    <property type="match status" value="1"/>
</dbReference>
<dbReference type="Gene3D" id="1.25.50.20">
    <property type="match status" value="1"/>
</dbReference>
<dbReference type="Gene3D" id="2.60.40.1910">
    <property type="match status" value="1"/>
</dbReference>
<dbReference type="Gene3D" id="1.10.390.10">
    <property type="entry name" value="Neutral Protease Domain 2"/>
    <property type="match status" value="1"/>
</dbReference>
<dbReference type="Gene3D" id="2.60.40.1730">
    <property type="entry name" value="tricorn interacting facor f3 domain"/>
    <property type="match status" value="1"/>
</dbReference>
<dbReference type="InterPro" id="IPR045357">
    <property type="entry name" value="Aminopeptidase_N-like_N"/>
</dbReference>
<dbReference type="InterPro" id="IPR042097">
    <property type="entry name" value="Aminopeptidase_N-like_N_sf"/>
</dbReference>
<dbReference type="InterPro" id="IPR024571">
    <property type="entry name" value="ERAP1-like_C_dom"/>
</dbReference>
<dbReference type="InterPro" id="IPR034016">
    <property type="entry name" value="M1_APN-typ"/>
</dbReference>
<dbReference type="InterPro" id="IPR001930">
    <property type="entry name" value="Peptidase_M1"/>
</dbReference>
<dbReference type="InterPro" id="IPR050344">
    <property type="entry name" value="Peptidase_M1_aminopeptidases"/>
</dbReference>
<dbReference type="InterPro" id="IPR014782">
    <property type="entry name" value="Peptidase_M1_dom"/>
</dbReference>
<dbReference type="InterPro" id="IPR027268">
    <property type="entry name" value="Peptidase_M4/M1_CTD_sf"/>
</dbReference>
<dbReference type="PANTHER" id="PTHR11533">
    <property type="entry name" value="PROTEASE M1 ZINC METALLOPROTEASE"/>
    <property type="match status" value="1"/>
</dbReference>
<dbReference type="PANTHER" id="PTHR11533:SF174">
    <property type="entry name" value="PUROMYCIN-SENSITIVE AMINOPEPTIDASE-RELATED"/>
    <property type="match status" value="1"/>
</dbReference>
<dbReference type="Pfam" id="PF11838">
    <property type="entry name" value="ERAP1_C"/>
    <property type="match status" value="1"/>
</dbReference>
<dbReference type="Pfam" id="PF01433">
    <property type="entry name" value="Peptidase_M1"/>
    <property type="match status" value="1"/>
</dbReference>
<dbReference type="Pfam" id="PF17900">
    <property type="entry name" value="Peptidase_M1_N"/>
    <property type="match status" value="1"/>
</dbReference>
<dbReference type="PRINTS" id="PR00756">
    <property type="entry name" value="ALADIPTASE"/>
</dbReference>
<dbReference type="SUPFAM" id="SSF63737">
    <property type="entry name" value="Leukotriene A4 hydrolase N-terminal domain"/>
    <property type="match status" value="1"/>
</dbReference>
<dbReference type="SUPFAM" id="SSF55486">
    <property type="entry name" value="Metalloproteases ('zincins'), catalytic domain"/>
    <property type="match status" value="1"/>
</dbReference>
<dbReference type="PROSITE" id="PS00142">
    <property type="entry name" value="ZINC_PROTEASE"/>
    <property type="match status" value="1"/>
</dbReference>
<keyword id="KW-0031">Aminopeptidase</keyword>
<keyword id="KW-0963">Cytoplasm</keyword>
<keyword id="KW-0256">Endoplasmic reticulum</keyword>
<keyword id="KW-0378">Hydrolase</keyword>
<keyword id="KW-0472">Membrane</keyword>
<keyword id="KW-0479">Metal-binding</keyword>
<keyword id="KW-0482">Metalloprotease</keyword>
<keyword id="KW-0492">Microsome</keyword>
<keyword id="KW-0645">Protease</keyword>
<keyword id="KW-1185">Reference proteome</keyword>
<keyword id="KW-0862">Zinc</keyword>
<name>APM1A_ORYSJ</name>
<gene>
    <name type="ordered locus">Os02g0218200</name>
    <name type="ordered locus">LOC_Os02g12650</name>
    <name type="ORF">OsJ_05906</name>
    <name type="ORF">P0027A02.7</name>
</gene>
<sequence>MAAAEQSAEQFRGQARLPGFAAPRRYDLRLVPDLDGCAFTGSVDVSVDVTAPTRFLVLNAAELEVSPGGVQFKPHGAEQELHPAEVTNVPEDEILIIRFNEVLPVGEGTLVIAFKGTLNDKMHGFYRSVYELNGEKKNMAVTQFEPADARRCFPCWDEPSFKAIFKITLEVPSETVALSNMPVVEEKVNGLIKAVYFQETPIMSTYLVAVIVGMFDYVEAFTTDGTRVRVYTQVGKSAQGKFALEVAVKTLVLFKEYFAVPYPLPKMDMIAIPDFASGAMENYGLVTYRETALLFDEKHSAAANKQRVAVVVAHELAHQWFGNLVTMEWWTHLWLNEGFATWVSYLAADNFFPEWNVWTQFLEESTTGFKLDALAGSHPIEVDVNHVDEIDEIFDAISYRKGAAVIRMLQSYLGAETFQKSLAAYIEKFAYSNAKTEDLWAALEEGSGEPVKTLMHSWTKQQGYPVVNVKLKDGKLEMEQTQFLSSGAEGVGQWVVPITLCCCSYSRQEKFLFNGKQEDFNLSGLVECQKKEDFWIKLNVNQTGFYRVSYDEELASRLRYAIEANKLSAADRYGVLDDTYALCMAGKQKLVSLLHLIAAYKDETEYTVLARVIDTSLSIVEMVAVAAPEGLGKLKKFLIDFLEPFAQRIGWDAKSGEGHLDALLRGTLLTALAELGHEATINEAVRRFNIFVEDRETPLLPPDVRKAAYVALMQTVNKSNRAGYESLLKIYKETDLSQEKVRILGSLASCPDPDVVRDTLDFMLSPEVRNQDSIFLLRGVGAAGHEVAWTWLKEKWDYISDTFSGTLLTYFVSTTVSPLRTDEMGDDAEEFFKSRTKANIARTVKQSIERVRINAKWVESTRAEANLGNVLKEISHDH</sequence>